<organism>
    <name type="scientific">Ignicoccus hospitalis (strain KIN4/I / DSM 18386 / JCM 14125)</name>
    <dbReference type="NCBI Taxonomy" id="453591"/>
    <lineage>
        <taxon>Archaea</taxon>
        <taxon>Thermoproteota</taxon>
        <taxon>Thermoprotei</taxon>
        <taxon>Desulfurococcales</taxon>
        <taxon>Desulfurococcaceae</taxon>
        <taxon>Ignicoccus</taxon>
    </lineage>
</organism>
<comment type="catalytic activity">
    <reaction evidence="1">
        <text>tRNA(Cys) + L-cysteine + ATP = L-cysteinyl-tRNA(Cys) + AMP + diphosphate</text>
        <dbReference type="Rhea" id="RHEA:17773"/>
        <dbReference type="Rhea" id="RHEA-COMP:9661"/>
        <dbReference type="Rhea" id="RHEA-COMP:9679"/>
        <dbReference type="ChEBI" id="CHEBI:30616"/>
        <dbReference type="ChEBI" id="CHEBI:33019"/>
        <dbReference type="ChEBI" id="CHEBI:35235"/>
        <dbReference type="ChEBI" id="CHEBI:78442"/>
        <dbReference type="ChEBI" id="CHEBI:78517"/>
        <dbReference type="ChEBI" id="CHEBI:456215"/>
        <dbReference type="EC" id="6.1.1.16"/>
    </reaction>
</comment>
<comment type="cofactor">
    <cofactor evidence="1">
        <name>Zn(2+)</name>
        <dbReference type="ChEBI" id="CHEBI:29105"/>
    </cofactor>
    <text evidence="1">Binds 1 zinc ion per subunit.</text>
</comment>
<comment type="subcellular location">
    <subcellularLocation>
        <location evidence="1">Cytoplasm</location>
    </subcellularLocation>
</comment>
<comment type="similarity">
    <text evidence="1">Belongs to the class-I aminoacyl-tRNA synthetase family.</text>
</comment>
<reference key="1">
    <citation type="journal article" date="2008" name="Genome Biol.">
        <title>A genomic analysis of the archaeal system Ignicoccus hospitalis-Nanoarchaeum equitans.</title>
        <authorList>
            <person name="Podar M."/>
            <person name="Anderson I."/>
            <person name="Makarova K.S."/>
            <person name="Elkins J.G."/>
            <person name="Ivanova N."/>
            <person name="Wall M.A."/>
            <person name="Lykidis A."/>
            <person name="Mavromatis K."/>
            <person name="Sun H."/>
            <person name="Hudson M.E."/>
            <person name="Chen W."/>
            <person name="Deciu C."/>
            <person name="Hutchison D."/>
            <person name="Eads J.R."/>
            <person name="Anderson A."/>
            <person name="Fernandes F."/>
            <person name="Szeto E."/>
            <person name="Lapidus A."/>
            <person name="Kyrpides N.C."/>
            <person name="Saier M.H. Jr."/>
            <person name="Richardson P.M."/>
            <person name="Rachel R."/>
            <person name="Huber H."/>
            <person name="Eisen J.A."/>
            <person name="Koonin E.V."/>
            <person name="Keller M."/>
            <person name="Stetter K.O."/>
        </authorList>
    </citation>
    <scope>NUCLEOTIDE SEQUENCE [LARGE SCALE GENOMIC DNA]</scope>
    <source>
        <strain>KIN4/I / DSM 18386 / JCM 14125</strain>
    </source>
</reference>
<protein>
    <recommendedName>
        <fullName evidence="1">Cysteine--tRNA ligase</fullName>
        <ecNumber evidence="1">6.1.1.16</ecNumber>
    </recommendedName>
    <alternativeName>
        <fullName evidence="1">Cysteinyl-tRNA synthetase</fullName>
        <shortName evidence="1">CysRS</shortName>
    </alternativeName>
</protein>
<gene>
    <name evidence="1" type="primary">cysS</name>
    <name type="ordered locus">Igni_0991</name>
</gene>
<dbReference type="EC" id="6.1.1.16" evidence="1"/>
<dbReference type="EMBL" id="CP000816">
    <property type="protein sequence ID" value="ABU82170.1"/>
    <property type="molecule type" value="Genomic_DNA"/>
</dbReference>
<dbReference type="RefSeq" id="WP_012123134.1">
    <property type="nucleotide sequence ID" value="NC_009776.1"/>
</dbReference>
<dbReference type="SMR" id="A8AB68"/>
<dbReference type="STRING" id="453591.Igni_0991"/>
<dbReference type="GeneID" id="5563070"/>
<dbReference type="KEGG" id="iho:Igni_0991"/>
<dbReference type="eggNOG" id="arCOG00486">
    <property type="taxonomic scope" value="Archaea"/>
</dbReference>
<dbReference type="HOGENOM" id="CLU_013528_0_1_2"/>
<dbReference type="OrthoDB" id="9445at2157"/>
<dbReference type="PhylomeDB" id="A8AB68"/>
<dbReference type="Proteomes" id="UP000000262">
    <property type="component" value="Chromosome"/>
</dbReference>
<dbReference type="GO" id="GO:0005737">
    <property type="term" value="C:cytoplasm"/>
    <property type="evidence" value="ECO:0007669"/>
    <property type="project" value="UniProtKB-SubCell"/>
</dbReference>
<dbReference type="GO" id="GO:0005524">
    <property type="term" value="F:ATP binding"/>
    <property type="evidence" value="ECO:0007669"/>
    <property type="project" value="UniProtKB-UniRule"/>
</dbReference>
<dbReference type="GO" id="GO:0004817">
    <property type="term" value="F:cysteine-tRNA ligase activity"/>
    <property type="evidence" value="ECO:0007669"/>
    <property type="project" value="UniProtKB-UniRule"/>
</dbReference>
<dbReference type="GO" id="GO:0008270">
    <property type="term" value="F:zinc ion binding"/>
    <property type="evidence" value="ECO:0007669"/>
    <property type="project" value="UniProtKB-UniRule"/>
</dbReference>
<dbReference type="GO" id="GO:0006423">
    <property type="term" value="P:cysteinyl-tRNA aminoacylation"/>
    <property type="evidence" value="ECO:0007669"/>
    <property type="project" value="UniProtKB-UniRule"/>
</dbReference>
<dbReference type="CDD" id="cd00672">
    <property type="entry name" value="CysRS_core"/>
    <property type="match status" value="1"/>
</dbReference>
<dbReference type="FunFam" id="3.40.50.620:FF:000130">
    <property type="entry name" value="Cysteine--tRNA ligase"/>
    <property type="match status" value="1"/>
</dbReference>
<dbReference type="Gene3D" id="1.20.120.1910">
    <property type="entry name" value="Cysteine-tRNA ligase, C-terminal anti-codon recognition domain"/>
    <property type="match status" value="1"/>
</dbReference>
<dbReference type="Gene3D" id="3.40.50.620">
    <property type="entry name" value="HUPs"/>
    <property type="match status" value="1"/>
</dbReference>
<dbReference type="HAMAP" id="MF_00041">
    <property type="entry name" value="Cys_tRNA_synth"/>
    <property type="match status" value="1"/>
</dbReference>
<dbReference type="InterPro" id="IPR015803">
    <property type="entry name" value="Cys-tRNA-ligase"/>
</dbReference>
<dbReference type="InterPro" id="IPR015273">
    <property type="entry name" value="Cys-tRNA-synt_Ia_DALR"/>
</dbReference>
<dbReference type="InterPro" id="IPR024909">
    <property type="entry name" value="Cys-tRNA/MSH_ligase"/>
</dbReference>
<dbReference type="InterPro" id="IPR014729">
    <property type="entry name" value="Rossmann-like_a/b/a_fold"/>
</dbReference>
<dbReference type="InterPro" id="IPR032678">
    <property type="entry name" value="tRNA-synt_1_cat_dom"/>
</dbReference>
<dbReference type="InterPro" id="IPR009080">
    <property type="entry name" value="tRNAsynth_Ia_anticodon-bd"/>
</dbReference>
<dbReference type="NCBIfam" id="TIGR00435">
    <property type="entry name" value="cysS"/>
    <property type="match status" value="1"/>
</dbReference>
<dbReference type="PANTHER" id="PTHR10890:SF3">
    <property type="entry name" value="CYSTEINE--TRNA LIGASE, CYTOPLASMIC"/>
    <property type="match status" value="1"/>
</dbReference>
<dbReference type="PANTHER" id="PTHR10890">
    <property type="entry name" value="CYSTEINYL-TRNA SYNTHETASE"/>
    <property type="match status" value="1"/>
</dbReference>
<dbReference type="Pfam" id="PF09190">
    <property type="entry name" value="DALR_2"/>
    <property type="match status" value="1"/>
</dbReference>
<dbReference type="Pfam" id="PF01406">
    <property type="entry name" value="tRNA-synt_1e"/>
    <property type="match status" value="1"/>
</dbReference>
<dbReference type="PRINTS" id="PR00983">
    <property type="entry name" value="TRNASYNTHCYS"/>
</dbReference>
<dbReference type="SMART" id="SM00840">
    <property type="entry name" value="DALR_2"/>
    <property type="match status" value="1"/>
</dbReference>
<dbReference type="SUPFAM" id="SSF47323">
    <property type="entry name" value="Anticodon-binding domain of a subclass of class I aminoacyl-tRNA synthetases"/>
    <property type="match status" value="1"/>
</dbReference>
<dbReference type="SUPFAM" id="SSF52374">
    <property type="entry name" value="Nucleotidylyl transferase"/>
    <property type="match status" value="1"/>
</dbReference>
<sequence>MLKVFNTLTRRLEDFKPLEPPLVRMYVCGPTVYDHSHIGHARTWVAFDIIKKYLRLKGYNVIHVQNITDIDDKIINRARELGVSWKEVADTYTNEYFELMKKLKVFPTVHPRVTDHIDDIIEFVQDLVDKGYAYVTQSGVYFDVDKYPYYGQLSGIKDKKMWSQEEFVKDKKNPYDFALWKCAKPGEPWWDSPWCKGRPGWHIECSTMSSKYLGKQFDVHGGARDLIFPHHENEIAQSEARFGVRPWVKYWLHSGYLTVKGEKMSKSLGNIVPLKDVLKSFEPEVVRYWLSSAHYRTELDFSWERLEEAKRSLTRMRMTVDELRKIVKKESPKGKLDEWEIKAIYEVSKIRNEFYDAMDNDFNTPEAWAAVREALRLGNKAIEEGSWEVSLAVLEFVNEADKVFEVFEERVHEGVEPFIDLLVEVRSKLREMKQWELADYIRSKLDELGVKLLDKGKETEWRFA</sequence>
<name>SYC_IGNH4</name>
<proteinExistence type="inferred from homology"/>
<feature type="chain" id="PRO_0000332919" description="Cysteine--tRNA ligase">
    <location>
        <begin position="1"/>
        <end position="464"/>
    </location>
</feature>
<feature type="short sequence motif" description="'HIGH' region">
    <location>
        <begin position="30"/>
        <end position="40"/>
    </location>
</feature>
<feature type="short sequence motif" description="'KMSKS' region">
    <location>
        <begin position="263"/>
        <end position="267"/>
    </location>
</feature>
<feature type="binding site" evidence="1">
    <location>
        <position position="28"/>
    </location>
    <ligand>
        <name>Zn(2+)</name>
        <dbReference type="ChEBI" id="CHEBI:29105"/>
    </ligand>
</feature>
<feature type="binding site" evidence="1">
    <location>
        <position position="205"/>
    </location>
    <ligand>
        <name>Zn(2+)</name>
        <dbReference type="ChEBI" id="CHEBI:29105"/>
    </ligand>
</feature>
<feature type="binding site" evidence="1">
    <location>
        <position position="230"/>
    </location>
    <ligand>
        <name>Zn(2+)</name>
        <dbReference type="ChEBI" id="CHEBI:29105"/>
    </ligand>
</feature>
<feature type="binding site" evidence="1">
    <location>
        <position position="234"/>
    </location>
    <ligand>
        <name>Zn(2+)</name>
        <dbReference type="ChEBI" id="CHEBI:29105"/>
    </ligand>
</feature>
<feature type="binding site" evidence="1">
    <location>
        <position position="266"/>
    </location>
    <ligand>
        <name>ATP</name>
        <dbReference type="ChEBI" id="CHEBI:30616"/>
    </ligand>
</feature>
<evidence type="ECO:0000255" key="1">
    <source>
        <dbReference type="HAMAP-Rule" id="MF_00041"/>
    </source>
</evidence>
<accession>A8AB68</accession>
<keyword id="KW-0030">Aminoacyl-tRNA synthetase</keyword>
<keyword id="KW-0067">ATP-binding</keyword>
<keyword id="KW-0963">Cytoplasm</keyword>
<keyword id="KW-0436">Ligase</keyword>
<keyword id="KW-0479">Metal-binding</keyword>
<keyword id="KW-0547">Nucleotide-binding</keyword>
<keyword id="KW-0648">Protein biosynthesis</keyword>
<keyword id="KW-1185">Reference proteome</keyword>
<keyword id="KW-0862">Zinc</keyword>